<gene>
    <name evidence="1" type="primary">rpmI</name>
    <name type="ordered locus">azo1081</name>
</gene>
<reference key="1">
    <citation type="journal article" date="2006" name="Nat. Biotechnol.">
        <title>Complete genome of the mutualistic, N2-fixing grass endophyte Azoarcus sp. strain BH72.</title>
        <authorList>
            <person name="Krause A."/>
            <person name="Ramakumar A."/>
            <person name="Bartels D."/>
            <person name="Battistoni F."/>
            <person name="Bekel T."/>
            <person name="Boch J."/>
            <person name="Boehm M."/>
            <person name="Friedrich F."/>
            <person name="Hurek T."/>
            <person name="Krause L."/>
            <person name="Linke B."/>
            <person name="McHardy A.C."/>
            <person name="Sarkar A."/>
            <person name="Schneiker S."/>
            <person name="Syed A.A."/>
            <person name="Thauer R."/>
            <person name="Vorhoelter F.-J."/>
            <person name="Weidner S."/>
            <person name="Puehler A."/>
            <person name="Reinhold-Hurek B."/>
            <person name="Kaiser O."/>
            <person name="Goesmann A."/>
        </authorList>
    </citation>
    <scope>NUCLEOTIDE SEQUENCE [LARGE SCALE GENOMIC DNA]</scope>
    <source>
        <strain>BH72</strain>
    </source>
</reference>
<feature type="chain" id="PRO_1000050656" description="Large ribosomal subunit protein bL35">
    <location>
        <begin position="1"/>
        <end position="65"/>
    </location>
</feature>
<feature type="region of interest" description="Disordered" evidence="2">
    <location>
        <begin position="1"/>
        <end position="26"/>
    </location>
</feature>
<feature type="compositionally biased region" description="Basic residues" evidence="2">
    <location>
        <begin position="1"/>
        <end position="16"/>
    </location>
</feature>
<dbReference type="EMBL" id="AM406670">
    <property type="protein sequence ID" value="CAL93698.1"/>
    <property type="molecule type" value="Genomic_DNA"/>
</dbReference>
<dbReference type="RefSeq" id="WP_011764815.1">
    <property type="nucleotide sequence ID" value="NC_008702.1"/>
</dbReference>
<dbReference type="SMR" id="A1K4E3"/>
<dbReference type="STRING" id="62928.azo1081"/>
<dbReference type="KEGG" id="aoa:dqs_1190"/>
<dbReference type="KEGG" id="azo:azo1081"/>
<dbReference type="eggNOG" id="COG0291">
    <property type="taxonomic scope" value="Bacteria"/>
</dbReference>
<dbReference type="HOGENOM" id="CLU_169643_1_0_4"/>
<dbReference type="OrthoDB" id="47476at2"/>
<dbReference type="Proteomes" id="UP000002588">
    <property type="component" value="Chromosome"/>
</dbReference>
<dbReference type="GO" id="GO:0022625">
    <property type="term" value="C:cytosolic large ribosomal subunit"/>
    <property type="evidence" value="ECO:0007669"/>
    <property type="project" value="TreeGrafter"/>
</dbReference>
<dbReference type="GO" id="GO:0003735">
    <property type="term" value="F:structural constituent of ribosome"/>
    <property type="evidence" value="ECO:0007669"/>
    <property type="project" value="InterPro"/>
</dbReference>
<dbReference type="GO" id="GO:0006412">
    <property type="term" value="P:translation"/>
    <property type="evidence" value="ECO:0007669"/>
    <property type="project" value="UniProtKB-UniRule"/>
</dbReference>
<dbReference type="FunFam" id="4.10.410.60:FF:000001">
    <property type="entry name" value="50S ribosomal protein L35"/>
    <property type="match status" value="1"/>
</dbReference>
<dbReference type="Gene3D" id="4.10.410.60">
    <property type="match status" value="1"/>
</dbReference>
<dbReference type="HAMAP" id="MF_00514">
    <property type="entry name" value="Ribosomal_bL35"/>
    <property type="match status" value="1"/>
</dbReference>
<dbReference type="InterPro" id="IPR001706">
    <property type="entry name" value="Ribosomal_bL35"/>
</dbReference>
<dbReference type="InterPro" id="IPR021137">
    <property type="entry name" value="Ribosomal_bL35-like"/>
</dbReference>
<dbReference type="InterPro" id="IPR018265">
    <property type="entry name" value="Ribosomal_bL35_CS"/>
</dbReference>
<dbReference type="InterPro" id="IPR037229">
    <property type="entry name" value="Ribosomal_bL35_sf"/>
</dbReference>
<dbReference type="NCBIfam" id="TIGR00001">
    <property type="entry name" value="rpmI_bact"/>
    <property type="match status" value="1"/>
</dbReference>
<dbReference type="PANTHER" id="PTHR33343">
    <property type="entry name" value="54S RIBOSOMAL PROTEIN BL35M"/>
    <property type="match status" value="1"/>
</dbReference>
<dbReference type="PANTHER" id="PTHR33343:SF1">
    <property type="entry name" value="LARGE RIBOSOMAL SUBUNIT PROTEIN BL35M"/>
    <property type="match status" value="1"/>
</dbReference>
<dbReference type="Pfam" id="PF01632">
    <property type="entry name" value="Ribosomal_L35p"/>
    <property type="match status" value="1"/>
</dbReference>
<dbReference type="PRINTS" id="PR00064">
    <property type="entry name" value="RIBOSOMALL35"/>
</dbReference>
<dbReference type="SUPFAM" id="SSF143034">
    <property type="entry name" value="L35p-like"/>
    <property type="match status" value="1"/>
</dbReference>
<dbReference type="PROSITE" id="PS00936">
    <property type="entry name" value="RIBOSOMAL_L35"/>
    <property type="match status" value="1"/>
</dbReference>
<accession>A1K4E3</accession>
<keyword id="KW-1185">Reference proteome</keyword>
<keyword id="KW-0687">Ribonucleoprotein</keyword>
<keyword id="KW-0689">Ribosomal protein</keyword>
<proteinExistence type="inferred from homology"/>
<sequence length="65" mass="7490">MPKMKTKSSAKKRFKVRSSGGIKRSQAFKRHILTKKTTKSKRQLRGMTEVHASDEKLIRAMLPYA</sequence>
<name>RL35_AZOSB</name>
<organism>
    <name type="scientific">Azoarcus sp. (strain BH72)</name>
    <dbReference type="NCBI Taxonomy" id="418699"/>
    <lineage>
        <taxon>Bacteria</taxon>
        <taxon>Pseudomonadati</taxon>
        <taxon>Pseudomonadota</taxon>
        <taxon>Betaproteobacteria</taxon>
        <taxon>Rhodocyclales</taxon>
        <taxon>Zoogloeaceae</taxon>
        <taxon>Azoarcus</taxon>
    </lineage>
</organism>
<comment type="similarity">
    <text evidence="1">Belongs to the bacterial ribosomal protein bL35 family.</text>
</comment>
<evidence type="ECO:0000255" key="1">
    <source>
        <dbReference type="HAMAP-Rule" id="MF_00514"/>
    </source>
</evidence>
<evidence type="ECO:0000256" key="2">
    <source>
        <dbReference type="SAM" id="MobiDB-lite"/>
    </source>
</evidence>
<evidence type="ECO:0000305" key="3"/>
<protein>
    <recommendedName>
        <fullName evidence="1">Large ribosomal subunit protein bL35</fullName>
    </recommendedName>
    <alternativeName>
        <fullName evidence="3">50S ribosomal protein L35</fullName>
    </alternativeName>
</protein>